<organism>
    <name type="scientific">Latilactobacillus sakei subsp. sakei (strain 23K)</name>
    <name type="common">Lactobacillus sakei subsp. sakei</name>
    <dbReference type="NCBI Taxonomy" id="314315"/>
    <lineage>
        <taxon>Bacteria</taxon>
        <taxon>Bacillati</taxon>
        <taxon>Bacillota</taxon>
        <taxon>Bacilli</taxon>
        <taxon>Lactobacillales</taxon>
        <taxon>Lactobacillaceae</taxon>
        <taxon>Latilactobacillus</taxon>
    </lineage>
</organism>
<gene>
    <name type="ordered locus">LCA_0919</name>
</gene>
<proteinExistence type="inferred from homology"/>
<sequence length="186" mass="21638">MKRLWLTGYRSYELGVFGDSGEKLKVIKYSLKKQLNNYLDDGLEWLITGGQMGIEQWGIQVAQELKIDYPELKVAMMLPFSDFGQQWNEQNQGTLMTLKAQVDFCEPVIKAPYSGPQQLRQYQQFMLTHTDGALLYYDREAPGKPEYDAKAIETYQEQHEYPNNQVDFFELQDLANELAELENQAF</sequence>
<dbReference type="EMBL" id="CR936503">
    <property type="protein sequence ID" value="CAI55221.1"/>
    <property type="molecule type" value="Genomic_DNA"/>
</dbReference>
<dbReference type="RefSeq" id="WP_011374621.1">
    <property type="nucleotide sequence ID" value="NC_007576.1"/>
</dbReference>
<dbReference type="SMR" id="Q38X60"/>
<dbReference type="STRING" id="314315.LCA_0919"/>
<dbReference type="KEGG" id="lsa:LCA_0919"/>
<dbReference type="eggNOG" id="COG4474">
    <property type="taxonomic scope" value="Bacteria"/>
</dbReference>
<dbReference type="HOGENOM" id="CLU_105319_0_0_9"/>
<dbReference type="OrthoDB" id="2301957at2"/>
<dbReference type="Proteomes" id="UP000002707">
    <property type="component" value="Chromosome"/>
</dbReference>
<dbReference type="Gene3D" id="3.40.50.450">
    <property type="match status" value="1"/>
</dbReference>
<dbReference type="HAMAP" id="MF_01575">
    <property type="entry name" value="UPF0398"/>
    <property type="match status" value="1"/>
</dbReference>
<dbReference type="InterPro" id="IPR010697">
    <property type="entry name" value="YspA"/>
</dbReference>
<dbReference type="NCBIfam" id="NF010181">
    <property type="entry name" value="PRK13660.1"/>
    <property type="match status" value="1"/>
</dbReference>
<dbReference type="PANTHER" id="PTHR38440:SF1">
    <property type="entry name" value="UPF0398 PROTEIN SPR0331"/>
    <property type="match status" value="1"/>
</dbReference>
<dbReference type="PANTHER" id="PTHR38440">
    <property type="entry name" value="UPF0398 PROTEIN YPSA"/>
    <property type="match status" value="1"/>
</dbReference>
<dbReference type="Pfam" id="PF06908">
    <property type="entry name" value="YpsA"/>
    <property type="match status" value="1"/>
</dbReference>
<dbReference type="PIRSF" id="PIRSF021290">
    <property type="entry name" value="DUF1273"/>
    <property type="match status" value="1"/>
</dbReference>
<dbReference type="SUPFAM" id="SSF102405">
    <property type="entry name" value="MCP/YpsA-like"/>
    <property type="match status" value="1"/>
</dbReference>
<name>Y919_LATSS</name>
<feature type="chain" id="PRO_0000267161" description="UPF0398 protein LCA_0919">
    <location>
        <begin position="1"/>
        <end position="186"/>
    </location>
</feature>
<protein>
    <recommendedName>
        <fullName evidence="1">UPF0398 protein LCA_0919</fullName>
    </recommendedName>
</protein>
<accession>Q38X60</accession>
<reference key="1">
    <citation type="journal article" date="2005" name="Nat. Biotechnol.">
        <title>The complete genome sequence of the meat-borne lactic acid bacterium Lactobacillus sakei 23K.</title>
        <authorList>
            <person name="Chaillou S."/>
            <person name="Champomier-Verges M.-C."/>
            <person name="Cornet M."/>
            <person name="Crutz-Le Coq A.-M."/>
            <person name="Dudez A.-M."/>
            <person name="Martin V."/>
            <person name="Beaufils S."/>
            <person name="Darbon-Rongere E."/>
            <person name="Bossy R."/>
            <person name="Loux V."/>
            <person name="Zagorec M."/>
        </authorList>
    </citation>
    <scope>NUCLEOTIDE SEQUENCE [LARGE SCALE GENOMIC DNA]</scope>
    <source>
        <strain>23K</strain>
    </source>
</reference>
<keyword id="KW-1185">Reference proteome</keyword>
<evidence type="ECO:0000255" key="1">
    <source>
        <dbReference type="HAMAP-Rule" id="MF_01575"/>
    </source>
</evidence>
<comment type="similarity">
    <text evidence="1">Belongs to the UPF0398 family.</text>
</comment>